<organism>
    <name type="scientific">Mus musculus</name>
    <name type="common">Mouse</name>
    <dbReference type="NCBI Taxonomy" id="10090"/>
    <lineage>
        <taxon>Eukaryota</taxon>
        <taxon>Metazoa</taxon>
        <taxon>Chordata</taxon>
        <taxon>Craniata</taxon>
        <taxon>Vertebrata</taxon>
        <taxon>Euteleostomi</taxon>
        <taxon>Mammalia</taxon>
        <taxon>Eutheria</taxon>
        <taxon>Euarchontoglires</taxon>
        <taxon>Glires</taxon>
        <taxon>Rodentia</taxon>
        <taxon>Myomorpha</taxon>
        <taxon>Muroidea</taxon>
        <taxon>Muridae</taxon>
        <taxon>Murinae</taxon>
        <taxon>Mus</taxon>
        <taxon>Mus</taxon>
    </lineage>
</organism>
<feature type="chain" id="PRO_0000338620" description="Solute carrier family 22 member 15">
    <location>
        <begin position="1"/>
        <end position="544"/>
    </location>
</feature>
<feature type="transmembrane region" description="Helical" evidence="2">
    <location>
        <begin position="22"/>
        <end position="42"/>
    </location>
</feature>
<feature type="transmembrane region" description="Helical" evidence="2">
    <location>
        <begin position="111"/>
        <end position="131"/>
    </location>
</feature>
<feature type="transmembrane region" description="Helical" evidence="2">
    <location>
        <begin position="141"/>
        <end position="161"/>
    </location>
</feature>
<feature type="transmembrane region" description="Helical" evidence="2">
    <location>
        <begin position="170"/>
        <end position="190"/>
    </location>
</feature>
<feature type="transmembrane region" description="Helical" evidence="2">
    <location>
        <begin position="201"/>
        <end position="221"/>
    </location>
</feature>
<feature type="transmembrane region" description="Helical" evidence="2">
    <location>
        <begin position="226"/>
        <end position="246"/>
    </location>
</feature>
<feature type="transmembrane region" description="Helical" evidence="2">
    <location>
        <begin position="303"/>
        <end position="323"/>
    </location>
</feature>
<feature type="transmembrane region" description="Helical" evidence="2">
    <location>
        <begin position="338"/>
        <end position="358"/>
    </location>
</feature>
<feature type="transmembrane region" description="Helical" evidence="2">
    <location>
        <begin position="368"/>
        <end position="388"/>
    </location>
</feature>
<feature type="transmembrane region" description="Helical" evidence="2">
    <location>
        <begin position="401"/>
        <end position="420"/>
    </location>
</feature>
<feature type="transmembrane region" description="Helical" evidence="2">
    <location>
        <begin position="433"/>
        <end position="453"/>
    </location>
</feature>
<feature type="transmembrane region" description="Helical" evidence="2">
    <location>
        <begin position="462"/>
        <end position="482"/>
    </location>
</feature>
<feature type="region of interest" description="Disordered" evidence="3">
    <location>
        <begin position="513"/>
        <end position="544"/>
    </location>
</feature>
<feature type="compositionally biased region" description="Acidic residues" evidence="3">
    <location>
        <begin position="526"/>
        <end position="544"/>
    </location>
</feature>
<feature type="glycosylation site" description="N-linked (GlcNAc...) asparagine" evidence="2">
    <location>
        <position position="58"/>
    </location>
</feature>
<feature type="glycosylation site" description="N-linked (GlcNAc...) asparagine" evidence="2">
    <location>
        <position position="63"/>
    </location>
</feature>
<feature type="glycosylation site" description="N-linked (GlcNAc...) asparagine" evidence="2">
    <location>
        <position position="80"/>
    </location>
</feature>
<feature type="glycosylation site" description="N-linked (GlcNAc...) asparagine" evidence="2">
    <location>
        <position position="106"/>
    </location>
</feature>
<feature type="glycosylation site" description="N-linked (GlcNAc...) asparagine" evidence="2">
    <location>
        <position position="286"/>
    </location>
</feature>
<feature type="splice variant" id="VSP_034061" description="In isoform 3." evidence="5">
    <location>
        <begin position="1"/>
        <end position="311"/>
    </location>
</feature>
<feature type="splice variant" id="VSP_034064" description="In isoform 3." evidence="5">
    <original>KEVQWSLPFIVFGATGLTSGLLSLLLPETLNSPLLETFSDLQMYSYRRLGEEALSLQTLDPPQPLDKVSSESEEEEEFYDADEETQMIK</original>
    <variation>VEGSTVVSALHRVWSHRPDLRPPEPAIARDSEQPFAGDIF</variation>
    <location>
        <begin position="456"/>
        <end position="544"/>
    </location>
</feature>
<feature type="sequence conflict" description="In Ref. 1; BAC26569." evidence="7" ref="1">
    <original>AA</original>
    <variation>PP</variation>
    <location>
        <begin position="370"/>
        <end position="371"/>
    </location>
</feature>
<feature type="sequence conflict" description="In Ref. 3; AAI52348." evidence="7" ref="3">
    <original>E</original>
    <variation>D</variation>
    <location>
        <position position="457"/>
    </location>
</feature>
<feature type="sequence conflict" description="In Ref. 3; AAI52348." evidence="7" ref="3">
    <original>P</original>
    <variation>S</variation>
    <location>
        <position position="519"/>
    </location>
</feature>
<accession>Q504N2</accession>
<accession>A7MCW2</accession>
<accession>F8WJ00</accession>
<accession>Q8CDR3</accession>
<reference key="1">
    <citation type="journal article" date="2005" name="Science">
        <title>The transcriptional landscape of the mammalian genome.</title>
        <authorList>
            <person name="Carninci P."/>
            <person name="Kasukawa T."/>
            <person name="Katayama S."/>
            <person name="Gough J."/>
            <person name="Frith M.C."/>
            <person name="Maeda N."/>
            <person name="Oyama R."/>
            <person name="Ravasi T."/>
            <person name="Lenhard B."/>
            <person name="Wells C."/>
            <person name="Kodzius R."/>
            <person name="Shimokawa K."/>
            <person name="Bajic V.B."/>
            <person name="Brenner S.E."/>
            <person name="Batalov S."/>
            <person name="Forrest A.R."/>
            <person name="Zavolan M."/>
            <person name="Davis M.J."/>
            <person name="Wilming L.G."/>
            <person name="Aidinis V."/>
            <person name="Allen J.E."/>
            <person name="Ambesi-Impiombato A."/>
            <person name="Apweiler R."/>
            <person name="Aturaliya R.N."/>
            <person name="Bailey T.L."/>
            <person name="Bansal M."/>
            <person name="Baxter L."/>
            <person name="Beisel K.W."/>
            <person name="Bersano T."/>
            <person name="Bono H."/>
            <person name="Chalk A.M."/>
            <person name="Chiu K.P."/>
            <person name="Choudhary V."/>
            <person name="Christoffels A."/>
            <person name="Clutterbuck D.R."/>
            <person name="Crowe M.L."/>
            <person name="Dalla E."/>
            <person name="Dalrymple B.P."/>
            <person name="de Bono B."/>
            <person name="Della Gatta G."/>
            <person name="di Bernardo D."/>
            <person name="Down T."/>
            <person name="Engstrom P."/>
            <person name="Fagiolini M."/>
            <person name="Faulkner G."/>
            <person name="Fletcher C.F."/>
            <person name="Fukushima T."/>
            <person name="Furuno M."/>
            <person name="Futaki S."/>
            <person name="Gariboldi M."/>
            <person name="Georgii-Hemming P."/>
            <person name="Gingeras T.R."/>
            <person name="Gojobori T."/>
            <person name="Green R.E."/>
            <person name="Gustincich S."/>
            <person name="Harbers M."/>
            <person name="Hayashi Y."/>
            <person name="Hensch T.K."/>
            <person name="Hirokawa N."/>
            <person name="Hill D."/>
            <person name="Huminiecki L."/>
            <person name="Iacono M."/>
            <person name="Ikeo K."/>
            <person name="Iwama A."/>
            <person name="Ishikawa T."/>
            <person name="Jakt M."/>
            <person name="Kanapin A."/>
            <person name="Katoh M."/>
            <person name="Kawasawa Y."/>
            <person name="Kelso J."/>
            <person name="Kitamura H."/>
            <person name="Kitano H."/>
            <person name="Kollias G."/>
            <person name="Krishnan S.P."/>
            <person name="Kruger A."/>
            <person name="Kummerfeld S.K."/>
            <person name="Kurochkin I.V."/>
            <person name="Lareau L.F."/>
            <person name="Lazarevic D."/>
            <person name="Lipovich L."/>
            <person name="Liu J."/>
            <person name="Liuni S."/>
            <person name="McWilliam S."/>
            <person name="Madan Babu M."/>
            <person name="Madera M."/>
            <person name="Marchionni L."/>
            <person name="Matsuda H."/>
            <person name="Matsuzawa S."/>
            <person name="Miki H."/>
            <person name="Mignone F."/>
            <person name="Miyake S."/>
            <person name="Morris K."/>
            <person name="Mottagui-Tabar S."/>
            <person name="Mulder N."/>
            <person name="Nakano N."/>
            <person name="Nakauchi H."/>
            <person name="Ng P."/>
            <person name="Nilsson R."/>
            <person name="Nishiguchi S."/>
            <person name="Nishikawa S."/>
            <person name="Nori F."/>
            <person name="Ohara O."/>
            <person name="Okazaki Y."/>
            <person name="Orlando V."/>
            <person name="Pang K.C."/>
            <person name="Pavan W.J."/>
            <person name="Pavesi G."/>
            <person name="Pesole G."/>
            <person name="Petrovsky N."/>
            <person name="Piazza S."/>
            <person name="Reed J."/>
            <person name="Reid J.F."/>
            <person name="Ring B.Z."/>
            <person name="Ringwald M."/>
            <person name="Rost B."/>
            <person name="Ruan Y."/>
            <person name="Salzberg S.L."/>
            <person name="Sandelin A."/>
            <person name="Schneider C."/>
            <person name="Schoenbach C."/>
            <person name="Sekiguchi K."/>
            <person name="Semple C.A."/>
            <person name="Seno S."/>
            <person name="Sessa L."/>
            <person name="Sheng Y."/>
            <person name="Shibata Y."/>
            <person name="Shimada H."/>
            <person name="Shimada K."/>
            <person name="Silva D."/>
            <person name="Sinclair B."/>
            <person name="Sperling S."/>
            <person name="Stupka E."/>
            <person name="Sugiura K."/>
            <person name="Sultana R."/>
            <person name="Takenaka Y."/>
            <person name="Taki K."/>
            <person name="Tammoja K."/>
            <person name="Tan S.L."/>
            <person name="Tang S."/>
            <person name="Taylor M.S."/>
            <person name="Tegner J."/>
            <person name="Teichmann S.A."/>
            <person name="Ueda H.R."/>
            <person name="van Nimwegen E."/>
            <person name="Verardo R."/>
            <person name="Wei C.L."/>
            <person name="Yagi K."/>
            <person name="Yamanishi H."/>
            <person name="Zabarovsky E."/>
            <person name="Zhu S."/>
            <person name="Zimmer A."/>
            <person name="Hide W."/>
            <person name="Bult C."/>
            <person name="Grimmond S.M."/>
            <person name="Teasdale R.D."/>
            <person name="Liu E.T."/>
            <person name="Brusic V."/>
            <person name="Quackenbush J."/>
            <person name="Wahlestedt C."/>
            <person name="Mattick J.S."/>
            <person name="Hume D.A."/>
            <person name="Kai C."/>
            <person name="Sasaki D."/>
            <person name="Tomaru Y."/>
            <person name="Fukuda S."/>
            <person name="Kanamori-Katayama M."/>
            <person name="Suzuki M."/>
            <person name="Aoki J."/>
            <person name="Arakawa T."/>
            <person name="Iida J."/>
            <person name="Imamura K."/>
            <person name="Itoh M."/>
            <person name="Kato T."/>
            <person name="Kawaji H."/>
            <person name="Kawagashira N."/>
            <person name="Kawashima T."/>
            <person name="Kojima M."/>
            <person name="Kondo S."/>
            <person name="Konno H."/>
            <person name="Nakano K."/>
            <person name="Ninomiya N."/>
            <person name="Nishio T."/>
            <person name="Okada M."/>
            <person name="Plessy C."/>
            <person name="Shibata K."/>
            <person name="Shiraki T."/>
            <person name="Suzuki S."/>
            <person name="Tagami M."/>
            <person name="Waki K."/>
            <person name="Watahiki A."/>
            <person name="Okamura-Oho Y."/>
            <person name="Suzuki H."/>
            <person name="Kawai J."/>
            <person name="Hayashizaki Y."/>
        </authorList>
    </citation>
    <scope>NUCLEOTIDE SEQUENCE [LARGE SCALE MRNA] (ISOFORM 3)</scope>
    <source>
        <strain>C57BL/6J</strain>
        <tissue>Testis</tissue>
    </source>
</reference>
<reference key="2">
    <citation type="journal article" date="2009" name="PLoS Biol.">
        <title>Lineage-specific biology revealed by a finished genome assembly of the mouse.</title>
        <authorList>
            <person name="Church D.M."/>
            <person name="Goodstadt L."/>
            <person name="Hillier L.W."/>
            <person name="Zody M.C."/>
            <person name="Goldstein S."/>
            <person name="She X."/>
            <person name="Bult C.J."/>
            <person name="Agarwala R."/>
            <person name="Cherry J.L."/>
            <person name="DiCuccio M."/>
            <person name="Hlavina W."/>
            <person name="Kapustin Y."/>
            <person name="Meric P."/>
            <person name="Maglott D."/>
            <person name="Birtle Z."/>
            <person name="Marques A.C."/>
            <person name="Graves T."/>
            <person name="Zhou S."/>
            <person name="Teague B."/>
            <person name="Potamousis K."/>
            <person name="Churas C."/>
            <person name="Place M."/>
            <person name="Herschleb J."/>
            <person name="Runnheim R."/>
            <person name="Forrest D."/>
            <person name="Amos-Landgraf J."/>
            <person name="Schwartz D.C."/>
            <person name="Cheng Z."/>
            <person name="Lindblad-Toh K."/>
            <person name="Eichler E.E."/>
            <person name="Ponting C.P."/>
        </authorList>
    </citation>
    <scope>NUCLEOTIDE SEQUENCE [LARGE SCALE GENOMIC DNA]</scope>
    <source>
        <strain>C57BL/6J</strain>
    </source>
</reference>
<reference key="3">
    <citation type="journal article" date="2004" name="Genome Res.">
        <title>The status, quality, and expansion of the NIH full-length cDNA project: the Mammalian Gene Collection (MGC).</title>
        <authorList>
            <consortium name="The MGC Project Team"/>
        </authorList>
    </citation>
    <scope>NUCLEOTIDE SEQUENCE [LARGE SCALE MRNA] OF 258-544 (ISOFORM 1)</scope>
</reference>
<reference key="4">
    <citation type="journal article" date="2020" name="FASEB J.">
        <title>Deorphaning a solute carrier 22 family member, SLC22A15, through functional genomic studies.</title>
        <authorList>
            <person name="Yee S.W."/>
            <person name="Buitrago D."/>
            <person name="Stecula A."/>
            <person name="Ngo H.X."/>
            <person name="Chien H.C."/>
            <person name="Zou L."/>
            <person name="Koleske M.L."/>
            <person name="Giacomini K.M."/>
        </authorList>
    </citation>
    <scope>FUNCTION</scope>
    <scope>TRANSPORTER ACTIVITY</scope>
    <scope>CAUTION</scope>
</reference>
<name>S22AF_MOUSE</name>
<sequence length="544" mass="60286">MEVEEAFQAVGEMGLYQMYLCFLLAVLLQLYVATEAILIALIGATPAYHWDMADLLPNQSHSNQTLGKGQAFGDWLLTANGSEIHKHVHFSNSFTSIASEWFLIANRSYKVSAASSSFFSGVFVGVISFGQLSDRFGRRKVYLTGFALDILFAVANGFSPSYEFFAVTRFLVGMMNGGMSLVAFVLLNECVGTAYWALAGSIGGLFFAVGIAQYALLGYFIRSWRTLAVLVNLQGTLVFLLSLFIPESPRWLYSQGRLSEAEEALYFIAKRNRKLKCTFSLTHPANRSYRATGSFLDLFRYRILLGHTLILMFIWFVCSLVYYGLTLSAGDLGGSIYANLALSGLIEIPSYPLCIYLINQRWFGRKRTLAAFLCLGGLACLIVMFLPEKKDTGVFAVVNSHSLSLLGKLTISAAFNIVYIYTSELYPTVIRNVGLGACSMFSRVGGIIAPFVPSLKEVQWSLPFIVFGATGLTSGLLSLLLPETLNSPLLETFSDLQMYSYRRLGEEALSLQTLDPPQPLDKVSSESEEEEEFYDADEETQMIK</sequence>
<keyword id="KW-0025">Alternative splicing</keyword>
<keyword id="KW-0029">Amino-acid transport</keyword>
<keyword id="KW-1003">Cell membrane</keyword>
<keyword id="KW-0325">Glycoprotein</keyword>
<keyword id="KW-0406">Ion transport</keyword>
<keyword id="KW-0472">Membrane</keyword>
<keyword id="KW-1185">Reference proteome</keyword>
<keyword id="KW-0812">Transmembrane</keyword>
<keyword id="KW-1133">Transmembrane helix</keyword>
<keyword id="KW-0813">Transport</keyword>
<gene>
    <name evidence="6" type="primary">Slc22a15</name>
</gene>
<proteinExistence type="evidence at transcript level"/>
<evidence type="ECO:0000250" key="1">
    <source>
        <dbReference type="UniProtKB" id="Q8IZD6"/>
    </source>
</evidence>
<evidence type="ECO:0000255" key="2"/>
<evidence type="ECO:0000256" key="3">
    <source>
        <dbReference type="SAM" id="MobiDB-lite"/>
    </source>
</evidence>
<evidence type="ECO:0000269" key="4">
    <source>
    </source>
</evidence>
<evidence type="ECO:0000303" key="5">
    <source>
    </source>
</evidence>
<evidence type="ECO:0000303" key="6">
    <source>
    </source>
</evidence>
<evidence type="ECO:0000305" key="7"/>
<evidence type="ECO:0000305" key="8">
    <source>
    </source>
</evidence>
<dbReference type="EMBL" id="AK029695">
    <property type="protein sequence ID" value="BAC26569.1"/>
    <property type="molecule type" value="mRNA"/>
</dbReference>
<dbReference type="EMBL" id="AC165165">
    <property type="status" value="NOT_ANNOTATED_CDS"/>
    <property type="molecule type" value="Genomic_DNA"/>
</dbReference>
<dbReference type="EMBL" id="BC152347">
    <property type="protein sequence ID" value="AAI52348.1"/>
    <property type="molecule type" value="mRNA"/>
</dbReference>
<dbReference type="CCDS" id="CCDS51022.1">
    <molecule id="Q504N2-1"/>
</dbReference>
<dbReference type="RefSeq" id="NP_001034460.2">
    <molecule id="Q504N2-1"/>
    <property type="nucleotide sequence ID" value="NM_001039371.2"/>
</dbReference>
<dbReference type="SMR" id="Q504N2"/>
<dbReference type="FunCoup" id="Q504N2">
    <property type="interactions" value="26"/>
</dbReference>
<dbReference type="STRING" id="10090.ENSMUSP00000102541"/>
<dbReference type="GlyCosmos" id="Q504N2">
    <property type="glycosylation" value="5 sites, No reported glycans"/>
</dbReference>
<dbReference type="GlyGen" id="Q504N2">
    <property type="glycosylation" value="6 sites, 1 N-linked glycan (2 sites)"/>
</dbReference>
<dbReference type="PhosphoSitePlus" id="Q504N2"/>
<dbReference type="PaxDb" id="10090-ENSMUSP00000102541"/>
<dbReference type="ProteomicsDB" id="260759">
    <molecule id="Q504N2-1"/>
</dbReference>
<dbReference type="ProteomicsDB" id="260760">
    <molecule id="Q504N2-3"/>
</dbReference>
<dbReference type="Antibodypedia" id="9786">
    <property type="antibodies" value="66 antibodies from 18 providers"/>
</dbReference>
<dbReference type="DNASU" id="242126"/>
<dbReference type="Ensembl" id="ENSMUST00000106928.10">
    <molecule id="Q504N2-1"/>
    <property type="protein sequence ID" value="ENSMUSP00000102541.3"/>
    <property type="gene ID" value="ENSMUSG00000033147.17"/>
</dbReference>
<dbReference type="GeneID" id="242126"/>
<dbReference type="KEGG" id="mmu:242126"/>
<dbReference type="UCSC" id="uc008qrl.2">
    <molecule id="Q504N2-1"/>
    <property type="organism name" value="mouse"/>
</dbReference>
<dbReference type="AGR" id="MGI:3607704"/>
<dbReference type="CTD" id="55356"/>
<dbReference type="MGI" id="MGI:3607704">
    <property type="gene designation" value="Slc22a15"/>
</dbReference>
<dbReference type="VEuPathDB" id="HostDB:ENSMUSG00000033147"/>
<dbReference type="eggNOG" id="KOG0255">
    <property type="taxonomic scope" value="Eukaryota"/>
</dbReference>
<dbReference type="GeneTree" id="ENSGT00940000160364"/>
<dbReference type="HOGENOM" id="CLU_001265_33_7_1"/>
<dbReference type="InParanoid" id="Q504N2"/>
<dbReference type="OMA" id="FPMETRA"/>
<dbReference type="OrthoDB" id="5296287at2759"/>
<dbReference type="PhylomeDB" id="Q504N2"/>
<dbReference type="TreeFam" id="TF315847"/>
<dbReference type="Reactome" id="R-MMU-549127">
    <property type="pathway name" value="Organic cation transport"/>
</dbReference>
<dbReference type="BioGRID-ORCS" id="242126">
    <property type="hits" value="0 hits in 77 CRISPR screens"/>
</dbReference>
<dbReference type="PRO" id="PR:Q504N2"/>
<dbReference type="Proteomes" id="UP000000589">
    <property type="component" value="Chromosome 3"/>
</dbReference>
<dbReference type="RNAct" id="Q504N2">
    <property type="molecule type" value="protein"/>
</dbReference>
<dbReference type="Bgee" id="ENSMUSG00000033147">
    <property type="expression patterns" value="Expressed in granulocyte and 156 other cell types or tissues"/>
</dbReference>
<dbReference type="ExpressionAtlas" id="Q504N2">
    <property type="expression patterns" value="baseline and differential"/>
</dbReference>
<dbReference type="GO" id="GO:0005886">
    <property type="term" value="C:plasma membrane"/>
    <property type="evidence" value="ECO:0000250"/>
    <property type="project" value="UniProtKB"/>
</dbReference>
<dbReference type="GO" id="GO:0015199">
    <property type="term" value="F:amino-acid betaine transmembrane transporter activity"/>
    <property type="evidence" value="ECO:0000314"/>
    <property type="project" value="UniProtKB"/>
</dbReference>
<dbReference type="GO" id="GO:0006865">
    <property type="term" value="P:amino acid transport"/>
    <property type="evidence" value="ECO:0007669"/>
    <property type="project" value="UniProtKB-KW"/>
</dbReference>
<dbReference type="GO" id="GO:0006811">
    <property type="term" value="P:monoatomic ion transport"/>
    <property type="evidence" value="ECO:0007669"/>
    <property type="project" value="UniProtKB-KW"/>
</dbReference>
<dbReference type="CDD" id="cd17377">
    <property type="entry name" value="MFS_SLC22A15"/>
    <property type="match status" value="1"/>
</dbReference>
<dbReference type="Gene3D" id="1.20.1250.20">
    <property type="entry name" value="MFS general substrate transporter like domains"/>
    <property type="match status" value="1"/>
</dbReference>
<dbReference type="InterPro" id="IPR020846">
    <property type="entry name" value="MFS_dom"/>
</dbReference>
<dbReference type="InterPro" id="IPR005828">
    <property type="entry name" value="MFS_sugar_transport-like"/>
</dbReference>
<dbReference type="InterPro" id="IPR036259">
    <property type="entry name" value="MFS_trans_sf"/>
</dbReference>
<dbReference type="PANTHER" id="PTHR24064">
    <property type="entry name" value="SOLUTE CARRIER FAMILY 22 MEMBER"/>
    <property type="match status" value="1"/>
</dbReference>
<dbReference type="Pfam" id="PF00083">
    <property type="entry name" value="Sugar_tr"/>
    <property type="match status" value="1"/>
</dbReference>
<dbReference type="SUPFAM" id="SSF103473">
    <property type="entry name" value="MFS general substrate transporter"/>
    <property type="match status" value="1"/>
</dbReference>
<dbReference type="PROSITE" id="PS50850">
    <property type="entry name" value="MFS"/>
    <property type="match status" value="1"/>
</dbReference>
<comment type="function">
    <text evidence="1 4">Organic zwitterion/cation transporter with apparent specificity for amino acids and their derivatives. Substrate selectivity and the transport mechanism, symport with sodium or facilitated diffusion allosterically regulated by sodium, remain to be elucidated.</text>
</comment>
<comment type="catalytic activity">
    <reaction evidence="4">
        <text>ergothioneine(in) = ergothioneine(out)</text>
        <dbReference type="Rhea" id="RHEA:76263"/>
        <dbReference type="ChEBI" id="CHEBI:134344"/>
    </reaction>
    <physiologicalReaction direction="right-to-left" evidence="8">
        <dbReference type="Rhea" id="RHEA:76265"/>
    </physiologicalReaction>
</comment>
<comment type="catalytic activity">
    <reaction evidence="4">
        <text>creatine(in) = creatine(out)</text>
        <dbReference type="Rhea" id="RHEA:73043"/>
        <dbReference type="ChEBI" id="CHEBI:57947"/>
    </reaction>
    <physiologicalReaction direction="right-to-left" evidence="8">
        <dbReference type="Rhea" id="RHEA:73045"/>
    </physiologicalReaction>
</comment>
<comment type="subcellular location">
    <subcellularLocation>
        <location evidence="1">Cell membrane</location>
        <topology evidence="2">Multi-pass membrane protein</topology>
    </subcellularLocation>
</comment>
<comment type="alternative products">
    <event type="alternative splicing"/>
    <isoform>
        <id>Q504N2-1</id>
        <name>1</name>
        <sequence type="displayed"/>
    </isoform>
    <isoform>
        <id>Q504N2-3</id>
        <name>3</name>
        <sequence type="described" ref="VSP_034061 VSP_034064"/>
    </isoform>
</comment>
<comment type="PTM">
    <text evidence="1">N-glycosylated.</text>
</comment>
<comment type="similarity">
    <text evidence="7">Belongs to the major facilitator (TC 2.A.1) superfamily. Organic cation transporter (TC 2.A.1.19) family.</text>
</comment>
<comment type="caution">
    <text evidence="4">Contrary to human ortholog, the transport of carnitine and carnosine could not be detected.</text>
</comment>
<protein>
    <recommendedName>
        <fullName>Solute carrier family 22 member 15</fullName>
    </recommendedName>
</protein>